<feature type="chain" id="PRO_1000075886" description="Transcription elongation factor GreA">
    <location>
        <begin position="1"/>
        <end position="158"/>
    </location>
</feature>
<name>GREA_RHIEC</name>
<comment type="function">
    <text evidence="1">Necessary for efficient RNA polymerase transcription elongation past template-encoded arresting sites. The arresting sites in DNA have the property of trapping a certain fraction of elongating RNA polymerases that pass through, resulting in locked ternary complexes. Cleavage of the nascent transcript by cleavage factors such as GreA or GreB allows the resumption of elongation from the new 3'terminus. GreA releases sequences of 2 to 3 nucleotides.</text>
</comment>
<comment type="similarity">
    <text evidence="1">Belongs to the GreA/GreB family.</text>
</comment>
<proteinExistence type="inferred from homology"/>
<reference key="1">
    <citation type="journal article" date="2006" name="Proc. Natl. Acad. Sci. U.S.A.">
        <title>The partitioned Rhizobium etli genome: genetic and metabolic redundancy in seven interacting replicons.</title>
        <authorList>
            <person name="Gonzalez V."/>
            <person name="Santamaria R.I."/>
            <person name="Bustos P."/>
            <person name="Hernandez-Gonzalez I."/>
            <person name="Medrano-Soto A."/>
            <person name="Moreno-Hagelsieb G."/>
            <person name="Janga S.C."/>
            <person name="Ramirez M.A."/>
            <person name="Jimenez-Jacinto V."/>
            <person name="Collado-Vides J."/>
            <person name="Davila G."/>
        </authorList>
    </citation>
    <scope>NUCLEOTIDE SEQUENCE [LARGE SCALE GENOMIC DNA]</scope>
    <source>
        <strain>ATCC 51251 / DSM 11541 / JCM 21823 / NBRC 15573 / CFN 42</strain>
    </source>
</reference>
<organism>
    <name type="scientific">Rhizobium etli (strain ATCC 51251 / DSM 11541 / JCM 21823 / NBRC 15573 / CFN 42)</name>
    <dbReference type="NCBI Taxonomy" id="347834"/>
    <lineage>
        <taxon>Bacteria</taxon>
        <taxon>Pseudomonadati</taxon>
        <taxon>Pseudomonadota</taxon>
        <taxon>Alphaproteobacteria</taxon>
        <taxon>Hyphomicrobiales</taxon>
        <taxon>Rhizobiaceae</taxon>
        <taxon>Rhizobium/Agrobacterium group</taxon>
        <taxon>Rhizobium</taxon>
    </lineage>
</organism>
<keyword id="KW-0238">DNA-binding</keyword>
<keyword id="KW-1185">Reference proteome</keyword>
<keyword id="KW-0804">Transcription</keyword>
<keyword id="KW-0805">Transcription regulation</keyword>
<evidence type="ECO:0000255" key="1">
    <source>
        <dbReference type="HAMAP-Rule" id="MF_00105"/>
    </source>
</evidence>
<accession>Q2K600</accession>
<sequence>MVEKVPMTQGGFVKLQEELRWRQQEERPRIIEAIAEARAHGDLSENAEYHAAKEAQSHNEGRITELEDLTARAEVIDLTKMSGDKIKFGAKVKLVDEDTEEEKTYQIVGDQEADVKAGRISISSPIARALIGKEVGDSIEVNAPGGSKAYEILQVSWG</sequence>
<protein>
    <recommendedName>
        <fullName evidence="1">Transcription elongation factor GreA</fullName>
    </recommendedName>
    <alternativeName>
        <fullName evidence="1">Transcript cleavage factor GreA</fullName>
    </alternativeName>
</protein>
<gene>
    <name evidence="1" type="primary">greA</name>
    <name type="ordered locus">RHE_CH02969</name>
</gene>
<dbReference type="EMBL" id="CP000133">
    <property type="protein sequence ID" value="ABC91736.1"/>
    <property type="molecule type" value="Genomic_DNA"/>
</dbReference>
<dbReference type="RefSeq" id="WP_011426212.1">
    <property type="nucleotide sequence ID" value="NC_007761.1"/>
</dbReference>
<dbReference type="SMR" id="Q2K600"/>
<dbReference type="KEGG" id="ret:RHE_CH02969"/>
<dbReference type="eggNOG" id="COG0782">
    <property type="taxonomic scope" value="Bacteria"/>
</dbReference>
<dbReference type="HOGENOM" id="CLU_101379_2_0_5"/>
<dbReference type="OrthoDB" id="9808774at2"/>
<dbReference type="Proteomes" id="UP000001936">
    <property type="component" value="Chromosome"/>
</dbReference>
<dbReference type="GO" id="GO:0003677">
    <property type="term" value="F:DNA binding"/>
    <property type="evidence" value="ECO:0007669"/>
    <property type="project" value="UniProtKB-UniRule"/>
</dbReference>
<dbReference type="GO" id="GO:0070063">
    <property type="term" value="F:RNA polymerase binding"/>
    <property type="evidence" value="ECO:0007669"/>
    <property type="project" value="InterPro"/>
</dbReference>
<dbReference type="GO" id="GO:0006354">
    <property type="term" value="P:DNA-templated transcription elongation"/>
    <property type="evidence" value="ECO:0007669"/>
    <property type="project" value="TreeGrafter"/>
</dbReference>
<dbReference type="GO" id="GO:0032784">
    <property type="term" value="P:regulation of DNA-templated transcription elongation"/>
    <property type="evidence" value="ECO:0007669"/>
    <property type="project" value="UniProtKB-UniRule"/>
</dbReference>
<dbReference type="FunFam" id="1.10.287.180:FF:000001">
    <property type="entry name" value="Transcription elongation factor GreA"/>
    <property type="match status" value="1"/>
</dbReference>
<dbReference type="FunFam" id="3.10.50.30:FF:000001">
    <property type="entry name" value="Transcription elongation factor GreA"/>
    <property type="match status" value="1"/>
</dbReference>
<dbReference type="Gene3D" id="3.10.50.30">
    <property type="entry name" value="Transcription elongation factor, GreA/GreB, C-terminal domain"/>
    <property type="match status" value="1"/>
</dbReference>
<dbReference type="Gene3D" id="1.10.287.180">
    <property type="entry name" value="Transcription elongation factor, GreA/GreB, N-terminal domain"/>
    <property type="match status" value="1"/>
</dbReference>
<dbReference type="HAMAP" id="MF_00105">
    <property type="entry name" value="GreA_GreB"/>
    <property type="match status" value="1"/>
</dbReference>
<dbReference type="InterPro" id="IPR036953">
    <property type="entry name" value="GreA/GreB_C_sf"/>
</dbReference>
<dbReference type="InterPro" id="IPR018151">
    <property type="entry name" value="TF_GreA/GreB_CS"/>
</dbReference>
<dbReference type="InterPro" id="IPR006359">
    <property type="entry name" value="Tscrpt_elong_fac_GreA"/>
</dbReference>
<dbReference type="InterPro" id="IPR028624">
    <property type="entry name" value="Tscrpt_elong_fac_GreA/B"/>
</dbReference>
<dbReference type="InterPro" id="IPR001437">
    <property type="entry name" value="Tscrpt_elong_fac_GreA/B_C"/>
</dbReference>
<dbReference type="InterPro" id="IPR023459">
    <property type="entry name" value="Tscrpt_elong_fac_GreA/B_fam"/>
</dbReference>
<dbReference type="InterPro" id="IPR022691">
    <property type="entry name" value="Tscrpt_elong_fac_GreA/B_N"/>
</dbReference>
<dbReference type="InterPro" id="IPR036805">
    <property type="entry name" value="Tscrpt_elong_fac_GreA/B_N_sf"/>
</dbReference>
<dbReference type="NCBIfam" id="TIGR01462">
    <property type="entry name" value="greA"/>
    <property type="match status" value="1"/>
</dbReference>
<dbReference type="NCBIfam" id="NF001261">
    <property type="entry name" value="PRK00226.1-2"/>
    <property type="match status" value="1"/>
</dbReference>
<dbReference type="NCBIfam" id="NF001263">
    <property type="entry name" value="PRK00226.1-4"/>
    <property type="match status" value="1"/>
</dbReference>
<dbReference type="NCBIfam" id="NF001264">
    <property type="entry name" value="PRK00226.1-5"/>
    <property type="match status" value="1"/>
</dbReference>
<dbReference type="PANTHER" id="PTHR30437">
    <property type="entry name" value="TRANSCRIPTION ELONGATION FACTOR GREA"/>
    <property type="match status" value="1"/>
</dbReference>
<dbReference type="PANTHER" id="PTHR30437:SF4">
    <property type="entry name" value="TRANSCRIPTION ELONGATION FACTOR GREA"/>
    <property type="match status" value="1"/>
</dbReference>
<dbReference type="Pfam" id="PF01272">
    <property type="entry name" value="GreA_GreB"/>
    <property type="match status" value="1"/>
</dbReference>
<dbReference type="Pfam" id="PF03449">
    <property type="entry name" value="GreA_GreB_N"/>
    <property type="match status" value="1"/>
</dbReference>
<dbReference type="PIRSF" id="PIRSF006092">
    <property type="entry name" value="GreA_GreB"/>
    <property type="match status" value="1"/>
</dbReference>
<dbReference type="SUPFAM" id="SSF54534">
    <property type="entry name" value="FKBP-like"/>
    <property type="match status" value="1"/>
</dbReference>
<dbReference type="SUPFAM" id="SSF46557">
    <property type="entry name" value="GreA transcript cleavage protein, N-terminal domain"/>
    <property type="match status" value="1"/>
</dbReference>
<dbReference type="PROSITE" id="PS00829">
    <property type="entry name" value="GREAB_1"/>
    <property type="match status" value="1"/>
</dbReference>
<dbReference type="PROSITE" id="PS00830">
    <property type="entry name" value="GREAB_2"/>
    <property type="match status" value="1"/>
</dbReference>